<protein>
    <recommendedName>
        <fullName evidence="1">GTPase Der</fullName>
    </recommendedName>
    <alternativeName>
        <fullName evidence="1">GTP-binding protein EngA</fullName>
    </alternativeName>
</protein>
<evidence type="ECO:0000255" key="1">
    <source>
        <dbReference type="HAMAP-Rule" id="MF_00195"/>
    </source>
</evidence>
<reference key="1">
    <citation type="journal article" date="2003" name="Nature">
        <title>The genome of a motile marine Synechococcus.</title>
        <authorList>
            <person name="Palenik B."/>
            <person name="Brahamsha B."/>
            <person name="Larimer F.W."/>
            <person name="Land M.L."/>
            <person name="Hauser L."/>
            <person name="Chain P."/>
            <person name="Lamerdin J.E."/>
            <person name="Regala W."/>
            <person name="Allen E.E."/>
            <person name="McCarren J."/>
            <person name="Paulsen I.T."/>
            <person name="Dufresne A."/>
            <person name="Partensky F."/>
            <person name="Webb E.A."/>
            <person name="Waterbury J."/>
        </authorList>
    </citation>
    <scope>NUCLEOTIDE SEQUENCE [LARGE SCALE GENOMIC DNA]</scope>
    <source>
        <strain>WH8102</strain>
    </source>
</reference>
<keyword id="KW-0342">GTP-binding</keyword>
<keyword id="KW-0547">Nucleotide-binding</keyword>
<keyword id="KW-0677">Repeat</keyword>
<keyword id="KW-0690">Ribosome biogenesis</keyword>
<feature type="chain" id="PRO_0000179062" description="GTPase Der">
    <location>
        <begin position="1"/>
        <end position="455"/>
    </location>
</feature>
<feature type="domain" description="EngA-type G 1">
    <location>
        <begin position="4"/>
        <end position="169"/>
    </location>
</feature>
<feature type="domain" description="EngA-type G 2">
    <location>
        <begin position="178"/>
        <end position="353"/>
    </location>
</feature>
<feature type="domain" description="KH-like" evidence="1">
    <location>
        <begin position="354"/>
        <end position="439"/>
    </location>
</feature>
<feature type="binding site" evidence="1">
    <location>
        <begin position="10"/>
        <end position="17"/>
    </location>
    <ligand>
        <name>GTP</name>
        <dbReference type="ChEBI" id="CHEBI:37565"/>
        <label>1</label>
    </ligand>
</feature>
<feature type="binding site" evidence="1">
    <location>
        <begin position="57"/>
        <end position="61"/>
    </location>
    <ligand>
        <name>GTP</name>
        <dbReference type="ChEBI" id="CHEBI:37565"/>
        <label>1</label>
    </ligand>
</feature>
<feature type="binding site" evidence="1">
    <location>
        <begin position="120"/>
        <end position="123"/>
    </location>
    <ligand>
        <name>GTP</name>
        <dbReference type="ChEBI" id="CHEBI:37565"/>
        <label>1</label>
    </ligand>
</feature>
<feature type="binding site" evidence="1">
    <location>
        <begin position="184"/>
        <end position="191"/>
    </location>
    <ligand>
        <name>GTP</name>
        <dbReference type="ChEBI" id="CHEBI:37565"/>
        <label>2</label>
    </ligand>
</feature>
<feature type="binding site" evidence="1">
    <location>
        <begin position="231"/>
        <end position="235"/>
    </location>
    <ligand>
        <name>GTP</name>
        <dbReference type="ChEBI" id="CHEBI:37565"/>
        <label>2</label>
    </ligand>
</feature>
<feature type="binding site" evidence="1">
    <location>
        <begin position="296"/>
        <end position="299"/>
    </location>
    <ligand>
        <name>GTP</name>
        <dbReference type="ChEBI" id="CHEBI:37565"/>
        <label>2</label>
    </ligand>
</feature>
<accession>Q7U8G2</accession>
<dbReference type="EMBL" id="BX569690">
    <property type="protein sequence ID" value="CAE07172.1"/>
    <property type="molecule type" value="Genomic_DNA"/>
</dbReference>
<dbReference type="RefSeq" id="WP_011127524.1">
    <property type="nucleotide sequence ID" value="NC_005070.1"/>
</dbReference>
<dbReference type="SMR" id="Q7U8G2"/>
<dbReference type="STRING" id="84588.SYNW0657"/>
<dbReference type="KEGG" id="syw:SYNW0657"/>
<dbReference type="eggNOG" id="COG1160">
    <property type="taxonomic scope" value="Bacteria"/>
</dbReference>
<dbReference type="HOGENOM" id="CLU_016077_6_2_3"/>
<dbReference type="Proteomes" id="UP000001422">
    <property type="component" value="Chromosome"/>
</dbReference>
<dbReference type="GO" id="GO:0016887">
    <property type="term" value="F:ATP hydrolysis activity"/>
    <property type="evidence" value="ECO:0007669"/>
    <property type="project" value="InterPro"/>
</dbReference>
<dbReference type="GO" id="GO:0005525">
    <property type="term" value="F:GTP binding"/>
    <property type="evidence" value="ECO:0007669"/>
    <property type="project" value="UniProtKB-UniRule"/>
</dbReference>
<dbReference type="GO" id="GO:0043022">
    <property type="term" value="F:ribosome binding"/>
    <property type="evidence" value="ECO:0007669"/>
    <property type="project" value="TreeGrafter"/>
</dbReference>
<dbReference type="GO" id="GO:0042254">
    <property type="term" value="P:ribosome biogenesis"/>
    <property type="evidence" value="ECO:0007669"/>
    <property type="project" value="UniProtKB-KW"/>
</dbReference>
<dbReference type="CDD" id="cd01894">
    <property type="entry name" value="EngA1"/>
    <property type="match status" value="1"/>
</dbReference>
<dbReference type="CDD" id="cd01895">
    <property type="entry name" value="EngA2"/>
    <property type="match status" value="1"/>
</dbReference>
<dbReference type="FunFam" id="3.30.300.20:FF:000004">
    <property type="entry name" value="GTPase Der"/>
    <property type="match status" value="1"/>
</dbReference>
<dbReference type="FunFam" id="3.40.50.300:FF:000040">
    <property type="entry name" value="GTPase Der"/>
    <property type="match status" value="1"/>
</dbReference>
<dbReference type="FunFam" id="3.40.50.300:FF:000057">
    <property type="entry name" value="GTPase Der"/>
    <property type="match status" value="1"/>
</dbReference>
<dbReference type="Gene3D" id="3.30.300.20">
    <property type="match status" value="1"/>
</dbReference>
<dbReference type="Gene3D" id="3.40.50.300">
    <property type="entry name" value="P-loop containing nucleotide triphosphate hydrolases"/>
    <property type="match status" value="2"/>
</dbReference>
<dbReference type="HAMAP" id="MF_00195">
    <property type="entry name" value="GTPase_Der"/>
    <property type="match status" value="1"/>
</dbReference>
<dbReference type="InterPro" id="IPR003593">
    <property type="entry name" value="AAA+_ATPase"/>
</dbReference>
<dbReference type="InterPro" id="IPR031166">
    <property type="entry name" value="G_ENGA"/>
</dbReference>
<dbReference type="InterPro" id="IPR006073">
    <property type="entry name" value="GTP-bd"/>
</dbReference>
<dbReference type="InterPro" id="IPR016484">
    <property type="entry name" value="GTPase_Der"/>
</dbReference>
<dbReference type="InterPro" id="IPR032859">
    <property type="entry name" value="KH_dom-like"/>
</dbReference>
<dbReference type="InterPro" id="IPR015946">
    <property type="entry name" value="KH_dom-like_a/b"/>
</dbReference>
<dbReference type="InterPro" id="IPR027417">
    <property type="entry name" value="P-loop_NTPase"/>
</dbReference>
<dbReference type="InterPro" id="IPR005225">
    <property type="entry name" value="Small_GTP-bd"/>
</dbReference>
<dbReference type="NCBIfam" id="TIGR03594">
    <property type="entry name" value="GTPase_EngA"/>
    <property type="match status" value="1"/>
</dbReference>
<dbReference type="NCBIfam" id="TIGR00231">
    <property type="entry name" value="small_GTP"/>
    <property type="match status" value="2"/>
</dbReference>
<dbReference type="PANTHER" id="PTHR43834">
    <property type="entry name" value="GTPASE DER"/>
    <property type="match status" value="1"/>
</dbReference>
<dbReference type="PANTHER" id="PTHR43834:SF6">
    <property type="entry name" value="GTPASE DER"/>
    <property type="match status" value="1"/>
</dbReference>
<dbReference type="Pfam" id="PF14714">
    <property type="entry name" value="KH_dom-like"/>
    <property type="match status" value="1"/>
</dbReference>
<dbReference type="Pfam" id="PF01926">
    <property type="entry name" value="MMR_HSR1"/>
    <property type="match status" value="2"/>
</dbReference>
<dbReference type="PIRSF" id="PIRSF006485">
    <property type="entry name" value="GTP-binding_EngA"/>
    <property type="match status" value="1"/>
</dbReference>
<dbReference type="PRINTS" id="PR00326">
    <property type="entry name" value="GTP1OBG"/>
</dbReference>
<dbReference type="SMART" id="SM00382">
    <property type="entry name" value="AAA"/>
    <property type="match status" value="2"/>
</dbReference>
<dbReference type="SUPFAM" id="SSF52540">
    <property type="entry name" value="P-loop containing nucleoside triphosphate hydrolases"/>
    <property type="match status" value="2"/>
</dbReference>
<dbReference type="PROSITE" id="PS51712">
    <property type="entry name" value="G_ENGA"/>
    <property type="match status" value="2"/>
</dbReference>
<gene>
    <name evidence="1" type="primary">der</name>
    <name type="synonym">engA</name>
    <name type="ordered locus">SYNW0657</name>
</gene>
<proteinExistence type="inferred from homology"/>
<comment type="function">
    <text evidence="1">GTPase that plays an essential role in the late steps of ribosome biogenesis.</text>
</comment>
<comment type="subunit">
    <text evidence="1">Associates with the 50S ribosomal subunit.</text>
</comment>
<comment type="similarity">
    <text evidence="1">Belongs to the TRAFAC class TrmE-Era-EngA-EngB-Septin-like GTPase superfamily. EngA (Der) GTPase family.</text>
</comment>
<organism>
    <name type="scientific">Parasynechococcus marenigrum (strain WH8102)</name>
    <dbReference type="NCBI Taxonomy" id="84588"/>
    <lineage>
        <taxon>Bacteria</taxon>
        <taxon>Bacillati</taxon>
        <taxon>Cyanobacteriota</taxon>
        <taxon>Cyanophyceae</taxon>
        <taxon>Synechococcales</taxon>
        <taxon>Prochlorococcaceae</taxon>
        <taxon>Parasynechococcus</taxon>
        <taxon>Parasynechococcus marenigrum</taxon>
    </lineage>
</organism>
<name>DER_PARMW</name>
<sequence length="455" mass="50904">MARPVVAIIGRPNVGKSTLVNRLCRSREAIVHDEPGVTRDRTYQDGYWGDREFKVVDTGGLVFDDDSEFLPEIREQAALAMEEASVAVVIVDGQQGITAADESIAEFLRSRPCPTLLAVNKCESPEQGLAMAAEFWSLGLGEPHPISAIHGVGTGDLLDQVLTFLPPKDQEGDEEEPIQMAIIGRPNVGKSSLLNAICGEQRAIVSPIRGTTRDTIDTNIVRENRPWRLVDTAGIRRRRSVNYGPEYFGINRSFKAIDRSDVCVLVIDALDGVTEQDQRLAGRIEEDGRACVVVVNKWDAVEKDSHTMTAMEKELRAKLYFLDWAPMLFTSALTGQRVDSIFALAALAVEQHRRRVSTSVVNEVLKEALSWRSPPTTRGGRQGRLYYGTQVASRPPSFTLFVNDPKLFGDTYRRYVERQIREGLGFDGTPVKLYWRGKQQRDAERDMVRQQNRQS</sequence>